<protein>
    <recommendedName>
        <fullName>Protein FLC EXPRESSOR</fullName>
        <shortName>AtFLX</shortName>
    </recommendedName>
    <alternativeName>
        <fullName>Protein SUPPRESSOR OF FRI 5</fullName>
    </alternativeName>
</protein>
<comment type="function">
    <text evidence="3 4 5">Transactivator required for FRIGIDA-mediated activation of FLC and for the expression of the repressors of flowering AGL27/MAF1 and AGL31/MAF2. Does not alter expression of known activators of FLC expression. Not required for the photoperiod response or for the vernalization response. Not redundant with FLXL4.</text>
</comment>
<comment type="subunit">
    <text evidence="4">Homodimer. Component of the transcription activator complex FRI-C composed of FRI, FRL1, SUF4, FLX and FES1. Interacts with FES1 and (via N-terminus) with FRI (via C-terminus). Interacts with SWC6, TAF14B and RIN1, three components of the SWR1 chromatin-remodeling complex.</text>
</comment>
<comment type="interaction">
    <interactant intactId="EBI-4447281">
        <id>F4IMQ0</id>
    </interactant>
    <interactant intactId="EBI-617095">
        <id>Q9LEZ3</id>
        <label>BIM1</label>
    </interactant>
    <organismsDiffer>false</organismsDiffer>
    <experiments>3</experiments>
</comment>
<comment type="subcellular location">
    <subcellularLocation>
        <location evidence="3 4">Cytoplasm</location>
    </subcellularLocation>
    <subcellularLocation>
        <location evidence="3 4">Nucleus</location>
    </subcellularLocation>
    <text evidence="4">homodimers present in the cytosol and heterodimers with FRI and FES1 detected only in the nucleus.</text>
</comment>
<comment type="alternative products">
    <event type="alternative splicing"/>
    <isoform>
        <id>F4IMQ0-1</id>
        <name>1</name>
        <sequence type="displayed"/>
    </isoform>
    <isoform>
        <id>F4IMQ0-2</id>
        <name>2</name>
        <sequence type="described" ref="VSP_053267"/>
    </isoform>
</comment>
<comment type="tissue specificity">
    <text evidence="3 4">Expressed in roots and leaves. Expressed in shoot and root apical meristems and vascular tissues.</text>
</comment>
<comment type="disruption phenotype">
    <text evidence="3">Early flowering. Decreased level of H3K4me3 and histone H3 and H4 acetylation in the region spanning the transcription-translation start site of FLC, but not of UFC or DFC.</text>
</comment>
<comment type="similarity">
    <text evidence="8">Belongs to the FLX family.</text>
</comment>
<keyword id="KW-0010">Activator</keyword>
<keyword id="KW-0025">Alternative splicing</keyword>
<keyword id="KW-0175">Coiled coil</keyword>
<keyword id="KW-0963">Cytoplasm</keyword>
<keyword id="KW-0217">Developmental protein</keyword>
<keyword id="KW-0221">Differentiation</keyword>
<keyword id="KW-0287">Flowering</keyword>
<keyword id="KW-0539">Nucleus</keyword>
<keyword id="KW-1185">Reference proteome</keyword>
<keyword id="KW-0804">Transcription</keyword>
<keyword id="KW-0805">Transcription regulation</keyword>
<feature type="chain" id="PRO_0000423734" description="Protein FLC EXPRESSOR">
    <location>
        <begin position="1"/>
        <end position="288"/>
    </location>
</feature>
<feature type="region of interest" description="Disordered" evidence="2">
    <location>
        <begin position="225"/>
        <end position="257"/>
    </location>
</feature>
<feature type="coiled-coil region" evidence="1">
    <location>
        <begin position="38"/>
        <end position="94"/>
    </location>
</feature>
<feature type="coiled-coil region" evidence="1">
    <location>
        <begin position="132"/>
        <end position="231"/>
    </location>
</feature>
<feature type="splice variant" id="VSP_053267" description="In isoform 2." evidence="6 7">
    <location>
        <begin position="177"/>
        <end position="288"/>
    </location>
</feature>
<feature type="mutagenesis site" description="In flx-3; early flowering." evidence="5">
    <original>R</original>
    <variation>K</variation>
    <location>
        <position position="176"/>
    </location>
</feature>
<name>FLX_ARATH</name>
<accession>F4IMQ0</accession>
<accession>O64735</accession>
<accession>Q93ZA1</accession>
<reference key="1">
    <citation type="journal article" date="1999" name="Nature">
        <title>Sequence and analysis of chromosome 2 of the plant Arabidopsis thaliana.</title>
        <authorList>
            <person name="Lin X."/>
            <person name="Kaul S."/>
            <person name="Rounsley S.D."/>
            <person name="Shea T.P."/>
            <person name="Benito M.-I."/>
            <person name="Town C.D."/>
            <person name="Fujii C.Y."/>
            <person name="Mason T.M."/>
            <person name="Bowman C.L."/>
            <person name="Barnstead M.E."/>
            <person name="Feldblyum T.V."/>
            <person name="Buell C.R."/>
            <person name="Ketchum K.A."/>
            <person name="Lee J.J."/>
            <person name="Ronning C.M."/>
            <person name="Koo H.L."/>
            <person name="Moffat K.S."/>
            <person name="Cronin L.A."/>
            <person name="Shen M."/>
            <person name="Pai G."/>
            <person name="Van Aken S."/>
            <person name="Umayam L."/>
            <person name="Tallon L.J."/>
            <person name="Gill J.E."/>
            <person name="Adams M.D."/>
            <person name="Carrera A.J."/>
            <person name="Creasy T.H."/>
            <person name="Goodman H.M."/>
            <person name="Somerville C.R."/>
            <person name="Copenhaver G.P."/>
            <person name="Preuss D."/>
            <person name="Nierman W.C."/>
            <person name="White O."/>
            <person name="Eisen J.A."/>
            <person name="Salzberg S.L."/>
            <person name="Fraser C.M."/>
            <person name="Venter J.C."/>
        </authorList>
    </citation>
    <scope>NUCLEOTIDE SEQUENCE [LARGE SCALE GENOMIC DNA] (ISOFORM 2)</scope>
    <source>
        <strain>cv. Columbia</strain>
    </source>
</reference>
<reference key="2">
    <citation type="journal article" date="2017" name="Plant J.">
        <title>Araport11: a complete reannotation of the Arabidopsis thaliana reference genome.</title>
        <authorList>
            <person name="Cheng C.Y."/>
            <person name="Krishnakumar V."/>
            <person name="Chan A.P."/>
            <person name="Thibaud-Nissen F."/>
            <person name="Schobel S."/>
            <person name="Town C.D."/>
        </authorList>
    </citation>
    <scope>GENOME REANNOTATION</scope>
    <source>
        <strain>cv. Columbia</strain>
    </source>
</reference>
<reference key="3">
    <citation type="journal article" date="2003" name="Science">
        <title>Empirical analysis of transcriptional activity in the Arabidopsis genome.</title>
        <authorList>
            <person name="Yamada K."/>
            <person name="Lim J."/>
            <person name="Dale J.M."/>
            <person name="Chen H."/>
            <person name="Shinn P."/>
            <person name="Palm C.J."/>
            <person name="Southwick A.M."/>
            <person name="Wu H.C."/>
            <person name="Kim C.J."/>
            <person name="Nguyen M."/>
            <person name="Pham P.K."/>
            <person name="Cheuk R.F."/>
            <person name="Karlin-Newmann G."/>
            <person name="Liu S.X."/>
            <person name="Lam B."/>
            <person name="Sakano H."/>
            <person name="Wu T."/>
            <person name="Yu G."/>
            <person name="Miranda M."/>
            <person name="Quach H.L."/>
            <person name="Tripp M."/>
            <person name="Chang C.H."/>
            <person name="Lee J.M."/>
            <person name="Toriumi M.J."/>
            <person name="Chan M.M."/>
            <person name="Tang C.C."/>
            <person name="Onodera C.S."/>
            <person name="Deng J.M."/>
            <person name="Akiyama K."/>
            <person name="Ansari Y."/>
            <person name="Arakawa T."/>
            <person name="Banh J."/>
            <person name="Banno F."/>
            <person name="Bowser L."/>
            <person name="Brooks S.Y."/>
            <person name="Carninci P."/>
            <person name="Chao Q."/>
            <person name="Choy N."/>
            <person name="Enju A."/>
            <person name="Goldsmith A.D."/>
            <person name="Gurjal M."/>
            <person name="Hansen N.F."/>
            <person name="Hayashizaki Y."/>
            <person name="Johnson-Hopson C."/>
            <person name="Hsuan V.W."/>
            <person name="Iida K."/>
            <person name="Karnes M."/>
            <person name="Khan S."/>
            <person name="Koesema E."/>
            <person name="Ishida J."/>
            <person name="Jiang P.X."/>
            <person name="Jones T."/>
            <person name="Kawai J."/>
            <person name="Kamiya A."/>
            <person name="Meyers C."/>
            <person name="Nakajima M."/>
            <person name="Narusaka M."/>
            <person name="Seki M."/>
            <person name="Sakurai T."/>
            <person name="Satou M."/>
            <person name="Tamse R."/>
            <person name="Vaysberg M."/>
            <person name="Wallender E.K."/>
            <person name="Wong C."/>
            <person name="Yamamura Y."/>
            <person name="Yuan S."/>
            <person name="Shinozaki K."/>
            <person name="Davis R.W."/>
            <person name="Theologis A."/>
            <person name="Ecker J.R."/>
        </authorList>
    </citation>
    <scope>NUCLEOTIDE SEQUENCE [LARGE SCALE MRNA] (ISOFORM 2)</scope>
    <source>
        <strain>cv. Columbia</strain>
    </source>
</reference>
<reference key="4">
    <citation type="submission" date="2005-03" db="EMBL/GenBank/DDBJ databases">
        <title>Large-scale analysis of RIKEN Arabidopsis full-length (RAFL) cDNAs.</title>
        <authorList>
            <person name="Totoki Y."/>
            <person name="Seki M."/>
            <person name="Ishida J."/>
            <person name="Nakajima M."/>
            <person name="Enju A."/>
            <person name="Kamiya A."/>
            <person name="Narusaka M."/>
            <person name="Shin-i T."/>
            <person name="Nakagawa M."/>
            <person name="Sakamoto N."/>
            <person name="Oishi K."/>
            <person name="Kohara Y."/>
            <person name="Kobayashi M."/>
            <person name="Toyoda A."/>
            <person name="Sakaki Y."/>
            <person name="Sakurai T."/>
            <person name="Iida K."/>
            <person name="Akiyama K."/>
            <person name="Satou M."/>
            <person name="Toyoda T."/>
            <person name="Konagaya A."/>
            <person name="Carninci P."/>
            <person name="Kawai J."/>
            <person name="Hayashizaki Y."/>
            <person name="Shinozaki K."/>
        </authorList>
    </citation>
    <scope>NUCLEOTIDE SEQUENCE [LARGE SCALE MRNA] (ISOFORM 2)</scope>
    <source>
        <strain>cv. Columbia</strain>
    </source>
</reference>
<reference key="5">
    <citation type="journal article" date="2008" name="Plant Cell Physiol.">
        <title>The FLX gene of Arabidopsis is required for FRI-dependent activation of FLC expression.</title>
        <authorList>
            <person name="Andersson C.R."/>
            <person name="Helliwell C.A."/>
            <person name="Bagnall D.J."/>
            <person name="Hughes T.P."/>
            <person name="Finnegan E.J."/>
            <person name="Peacock W.J."/>
            <person name="Dennis E.S."/>
        </authorList>
    </citation>
    <scope>FUNCTION</scope>
    <scope>ALTERNATIVE SPLICING</scope>
    <scope>DISRUPTION PHENOTYPE</scope>
    <scope>TISSUE SPECIFICITY</scope>
    <scope>SUBCELLULAR LOCATION</scope>
    <source>
        <strain>cv. C24</strain>
    </source>
</reference>
<reference key="6">
    <citation type="journal article" date="2011" name="Plant Cell">
        <title>The FRIGIDA complex activates transcription of FLC, a strong flowering repressor in Arabidopsis, by recruiting chromatin modification factors.</title>
        <authorList>
            <person name="Choi K."/>
            <person name="Kim J."/>
            <person name="Hwang H.J."/>
            <person name="Kim S."/>
            <person name="Park C."/>
            <person name="Kim S.Y."/>
            <person name="Lee I."/>
        </authorList>
    </citation>
    <scope>FUNCTION</scope>
    <scope>IDENTIFICATION BY MASS SPECTROMETRY IN THE FRI-C COMPLEX</scope>
    <scope>INTERACTION WITH FRI; SWC6; TAF14B; RIN1 AND FES1</scope>
    <scope>TISSUE SPECIFICITY</scope>
    <scope>SUBCELLULAR LOCATION</scope>
</reference>
<reference key="7">
    <citation type="journal article" date="2013" name="Nat. Commun.">
        <title>Two FLX family members are non-redundantly required to establish the vernalization requirement in Arabidopsis.</title>
        <authorList>
            <person name="Lee J."/>
            <person name="Amasino R.M."/>
        </authorList>
    </citation>
    <scope>FUNCTION</scope>
    <scope>MUTAGENESIS OF ARG-176</scope>
</reference>
<dbReference type="EMBL" id="AC004165">
    <property type="protein sequence ID" value="AAC16960.2"/>
    <property type="molecule type" value="Genomic_DNA"/>
</dbReference>
<dbReference type="EMBL" id="CP002685">
    <property type="protein sequence ID" value="AEC08347.1"/>
    <property type="molecule type" value="Genomic_DNA"/>
</dbReference>
<dbReference type="EMBL" id="CP002685">
    <property type="protein sequence ID" value="AEC08348.1"/>
    <property type="molecule type" value="Genomic_DNA"/>
</dbReference>
<dbReference type="EMBL" id="CP002685">
    <property type="protein sequence ID" value="ANM62825.1"/>
    <property type="molecule type" value="Genomic_DNA"/>
</dbReference>
<dbReference type="EMBL" id="AY057695">
    <property type="protein sequence ID" value="AAL15325.1"/>
    <property type="molecule type" value="mRNA"/>
</dbReference>
<dbReference type="EMBL" id="AY116952">
    <property type="protein sequence ID" value="AAM51586.1"/>
    <property type="molecule type" value="mRNA"/>
</dbReference>
<dbReference type="EMBL" id="AK221657">
    <property type="protein sequence ID" value="BAD95329.1"/>
    <property type="molecule type" value="mRNA"/>
</dbReference>
<dbReference type="PIR" id="T00586">
    <property type="entry name" value="T00586"/>
</dbReference>
<dbReference type="RefSeq" id="NP_001154541.1">
    <molecule id="F4IMQ0-1"/>
    <property type="nucleotide sequence ID" value="NM_001161069.1"/>
</dbReference>
<dbReference type="RefSeq" id="NP_001324953.1">
    <molecule id="F4IMQ0-2"/>
    <property type="nucleotide sequence ID" value="NM_001336242.1"/>
</dbReference>
<dbReference type="RefSeq" id="NP_565694.1">
    <molecule id="F4IMQ0-2"/>
    <property type="nucleotide sequence ID" value="NM_128567.3"/>
</dbReference>
<dbReference type="SMR" id="F4IMQ0"/>
<dbReference type="BioGRID" id="2913">
    <property type="interactions" value="13"/>
</dbReference>
<dbReference type="FunCoup" id="F4IMQ0">
    <property type="interactions" value="249"/>
</dbReference>
<dbReference type="IntAct" id="F4IMQ0">
    <property type="interactions" value="5"/>
</dbReference>
<dbReference type="STRING" id="3702.F4IMQ0"/>
<dbReference type="GlyGen" id="F4IMQ0">
    <property type="glycosylation" value="5 sites, 1 O-linked glycan (4 sites)"/>
</dbReference>
<dbReference type="PaxDb" id="3702-AT2G30120.2"/>
<dbReference type="EnsemblPlants" id="AT2G30120.1">
    <molecule id="F4IMQ0-2"/>
    <property type="protein sequence ID" value="AT2G30120.1"/>
    <property type="gene ID" value="AT2G30120"/>
</dbReference>
<dbReference type="EnsemblPlants" id="AT2G30120.2">
    <molecule id="F4IMQ0-1"/>
    <property type="protein sequence ID" value="AT2G30120.2"/>
    <property type="gene ID" value="AT2G30120"/>
</dbReference>
<dbReference type="EnsemblPlants" id="AT2G30120.6">
    <molecule id="F4IMQ0-2"/>
    <property type="protein sequence ID" value="AT2G30120.6"/>
    <property type="gene ID" value="AT2G30120"/>
</dbReference>
<dbReference type="GeneID" id="817564"/>
<dbReference type="Gramene" id="AT2G30120.1">
    <molecule id="F4IMQ0-2"/>
    <property type="protein sequence ID" value="AT2G30120.1"/>
    <property type="gene ID" value="AT2G30120"/>
</dbReference>
<dbReference type="Gramene" id="AT2G30120.2">
    <molecule id="F4IMQ0-1"/>
    <property type="protein sequence ID" value="AT2G30120.2"/>
    <property type="gene ID" value="AT2G30120"/>
</dbReference>
<dbReference type="Gramene" id="AT2G30120.6">
    <molecule id="F4IMQ0-2"/>
    <property type="protein sequence ID" value="AT2G30120.6"/>
    <property type="gene ID" value="AT2G30120"/>
</dbReference>
<dbReference type="KEGG" id="ath:AT2G30120"/>
<dbReference type="Araport" id="AT2G30120"/>
<dbReference type="TAIR" id="AT2G30120"/>
<dbReference type="eggNOG" id="ENOG502RJEI">
    <property type="taxonomic scope" value="Eukaryota"/>
</dbReference>
<dbReference type="HOGENOM" id="CLU_051930_4_1_1"/>
<dbReference type="InParanoid" id="F4IMQ0"/>
<dbReference type="OMA" id="NVPFENQ"/>
<dbReference type="PRO" id="PR:F4IMQ0"/>
<dbReference type="Proteomes" id="UP000006548">
    <property type="component" value="Chromosome 2"/>
</dbReference>
<dbReference type="ExpressionAtlas" id="F4IMQ0">
    <property type="expression patterns" value="baseline and differential"/>
</dbReference>
<dbReference type="GO" id="GO:0005737">
    <property type="term" value="C:cytoplasm"/>
    <property type="evidence" value="ECO:0007669"/>
    <property type="project" value="UniProtKB-SubCell"/>
</dbReference>
<dbReference type="GO" id="GO:0005634">
    <property type="term" value="C:nucleus"/>
    <property type="evidence" value="ECO:0007669"/>
    <property type="project" value="UniProtKB-SubCell"/>
</dbReference>
<dbReference type="GO" id="GO:0030154">
    <property type="term" value="P:cell differentiation"/>
    <property type="evidence" value="ECO:0007669"/>
    <property type="project" value="UniProtKB-KW"/>
</dbReference>
<dbReference type="GO" id="GO:0009908">
    <property type="term" value="P:flower development"/>
    <property type="evidence" value="ECO:0007669"/>
    <property type="project" value="UniProtKB-KW"/>
</dbReference>
<dbReference type="InterPro" id="IPR040353">
    <property type="entry name" value="FLX/FLX-like"/>
</dbReference>
<dbReference type="PANTHER" id="PTHR33405:SF17">
    <property type="entry name" value="PROTEIN FLC EXPRESSOR"/>
    <property type="match status" value="1"/>
</dbReference>
<dbReference type="PANTHER" id="PTHR33405">
    <property type="entry name" value="PROTEIN FLX-LIKE 2"/>
    <property type="match status" value="1"/>
</dbReference>
<gene>
    <name type="primary">FLX</name>
    <name type="synonym">SUF5</name>
    <name type="ordered locus">At2g30120</name>
    <name type="ORF">E13.14</name>
</gene>
<proteinExistence type="evidence at protein level"/>
<evidence type="ECO:0000255" key="1"/>
<evidence type="ECO:0000256" key="2">
    <source>
        <dbReference type="SAM" id="MobiDB-lite"/>
    </source>
</evidence>
<evidence type="ECO:0000269" key="3">
    <source>
    </source>
</evidence>
<evidence type="ECO:0000269" key="4">
    <source>
    </source>
</evidence>
<evidence type="ECO:0000269" key="5">
    <source>
    </source>
</evidence>
<evidence type="ECO:0000303" key="6">
    <source>
    </source>
</evidence>
<evidence type="ECO:0000303" key="7">
    <source ref="4"/>
</evidence>
<evidence type="ECO:0000305" key="8"/>
<organism>
    <name type="scientific">Arabidopsis thaliana</name>
    <name type="common">Mouse-ear cress</name>
    <dbReference type="NCBI Taxonomy" id="3702"/>
    <lineage>
        <taxon>Eukaryota</taxon>
        <taxon>Viridiplantae</taxon>
        <taxon>Streptophyta</taxon>
        <taxon>Embryophyta</taxon>
        <taxon>Tracheophyta</taxon>
        <taxon>Spermatophyta</taxon>
        <taxon>Magnoliopsida</taxon>
        <taxon>eudicotyledons</taxon>
        <taxon>Gunneridae</taxon>
        <taxon>Pentapetalae</taxon>
        <taxon>rosids</taxon>
        <taxon>malvids</taxon>
        <taxon>Brassicales</taxon>
        <taxon>Brassicaceae</taxon>
        <taxon>Camelineae</taxon>
        <taxon>Arabidopsis</taxon>
    </lineage>
</organism>
<sequence>MAGRDRYIPSSAVSTSSSSRLLESQLIESDRNRARSVILEDRIAIQHREIQSLLNDNQRLAVAHIGLKDQLNVAKRELERLLETAVKVKAEGEAKVREVYQNALRMEAEARVIDGLGAELGQVRSDVQRLGSDRQELATELAMFDDEMAKAKPNSDRAIEVKLEIEILRGEIRKGRAALELEKKTRASNLHHERGMEKTIDHLNREIVKLEEELVDLETKAREANAAAEAAPTPSPGLAASYGNNTDDIYGGQGRQYPEANGTHELVLREKSYVHRLVSVQLVQVSVG</sequence>